<dbReference type="EC" id="2.4.2.22" evidence="1"/>
<dbReference type="EMBL" id="CP000680">
    <property type="protein sequence ID" value="ABP83025.1"/>
    <property type="molecule type" value="Genomic_DNA"/>
</dbReference>
<dbReference type="SMR" id="A4XNV9"/>
<dbReference type="STRING" id="399739.Pmen_0251"/>
<dbReference type="KEGG" id="pmy:Pmen_0251"/>
<dbReference type="PATRIC" id="fig|399739.8.peg.256"/>
<dbReference type="eggNOG" id="COG0503">
    <property type="taxonomic scope" value="Bacteria"/>
</dbReference>
<dbReference type="HOGENOM" id="CLU_099015_0_0_6"/>
<dbReference type="OrthoDB" id="9790678at2"/>
<dbReference type="UniPathway" id="UPA00602">
    <property type="reaction ID" value="UER00658"/>
</dbReference>
<dbReference type="GO" id="GO:0005737">
    <property type="term" value="C:cytoplasm"/>
    <property type="evidence" value="ECO:0007669"/>
    <property type="project" value="UniProtKB-SubCell"/>
</dbReference>
<dbReference type="GO" id="GO:0000310">
    <property type="term" value="F:xanthine phosphoribosyltransferase activity"/>
    <property type="evidence" value="ECO:0007669"/>
    <property type="project" value="UniProtKB-UniRule"/>
</dbReference>
<dbReference type="GO" id="GO:0006166">
    <property type="term" value="P:purine ribonucleoside salvage"/>
    <property type="evidence" value="ECO:0007669"/>
    <property type="project" value="UniProtKB-KW"/>
</dbReference>
<dbReference type="GO" id="GO:0046110">
    <property type="term" value="P:xanthine metabolic process"/>
    <property type="evidence" value="ECO:0007669"/>
    <property type="project" value="InterPro"/>
</dbReference>
<dbReference type="GO" id="GO:0032265">
    <property type="term" value="P:XMP salvage"/>
    <property type="evidence" value="ECO:0007669"/>
    <property type="project" value="UniProtKB-UniRule"/>
</dbReference>
<dbReference type="CDD" id="cd06223">
    <property type="entry name" value="PRTases_typeI"/>
    <property type="match status" value="1"/>
</dbReference>
<dbReference type="FunFam" id="3.40.50.2020:FF:000027">
    <property type="entry name" value="Xanthine phosphoribosyltransferase"/>
    <property type="match status" value="1"/>
</dbReference>
<dbReference type="Gene3D" id="3.40.50.2020">
    <property type="match status" value="1"/>
</dbReference>
<dbReference type="HAMAP" id="MF_01184">
    <property type="entry name" value="XPRTase"/>
    <property type="match status" value="1"/>
</dbReference>
<dbReference type="InterPro" id="IPR000836">
    <property type="entry name" value="PRibTrfase_dom"/>
</dbReference>
<dbReference type="InterPro" id="IPR029057">
    <property type="entry name" value="PRTase-like"/>
</dbReference>
<dbReference type="InterPro" id="IPR050118">
    <property type="entry name" value="Pur/Pyrimidine_PRTase"/>
</dbReference>
<dbReference type="InterPro" id="IPR010079">
    <property type="entry name" value="Xanthine_PRibTrfase"/>
</dbReference>
<dbReference type="NCBIfam" id="NF006671">
    <property type="entry name" value="PRK09219.1"/>
    <property type="match status" value="1"/>
</dbReference>
<dbReference type="NCBIfam" id="TIGR01744">
    <property type="entry name" value="XPRTase"/>
    <property type="match status" value="1"/>
</dbReference>
<dbReference type="PANTHER" id="PTHR43864">
    <property type="entry name" value="HYPOXANTHINE/GUANINE PHOSPHORIBOSYLTRANSFERASE"/>
    <property type="match status" value="1"/>
</dbReference>
<dbReference type="PANTHER" id="PTHR43864:SF1">
    <property type="entry name" value="XANTHINE PHOSPHORIBOSYLTRANSFERASE"/>
    <property type="match status" value="1"/>
</dbReference>
<dbReference type="Pfam" id="PF00156">
    <property type="entry name" value="Pribosyltran"/>
    <property type="match status" value="1"/>
</dbReference>
<dbReference type="SUPFAM" id="SSF53271">
    <property type="entry name" value="PRTase-like"/>
    <property type="match status" value="1"/>
</dbReference>
<gene>
    <name evidence="1" type="primary">xpt</name>
    <name type="ordered locus">Pmen_0251</name>
</gene>
<comment type="function">
    <text evidence="1">Converts the preformed base xanthine, a product of nucleic acid breakdown, to xanthosine 5'-monophosphate (XMP), so it can be reused for RNA or DNA synthesis.</text>
</comment>
<comment type="catalytic activity">
    <reaction evidence="1">
        <text>XMP + diphosphate = xanthine + 5-phospho-alpha-D-ribose 1-diphosphate</text>
        <dbReference type="Rhea" id="RHEA:10800"/>
        <dbReference type="ChEBI" id="CHEBI:17712"/>
        <dbReference type="ChEBI" id="CHEBI:33019"/>
        <dbReference type="ChEBI" id="CHEBI:57464"/>
        <dbReference type="ChEBI" id="CHEBI:58017"/>
        <dbReference type="EC" id="2.4.2.22"/>
    </reaction>
</comment>
<comment type="pathway">
    <text evidence="1">Purine metabolism; XMP biosynthesis via salvage pathway; XMP from xanthine: step 1/1.</text>
</comment>
<comment type="subunit">
    <text evidence="1">Homodimer.</text>
</comment>
<comment type="subcellular location">
    <subcellularLocation>
        <location evidence="1">Cytoplasm</location>
    </subcellularLocation>
</comment>
<comment type="similarity">
    <text evidence="1">Belongs to the purine/pyrimidine phosphoribosyltransferase family. Xpt subfamily.</text>
</comment>
<protein>
    <recommendedName>
        <fullName evidence="1">Xanthine phosphoribosyltransferase</fullName>
        <shortName evidence="1">XPRTase</shortName>
        <ecNumber evidence="1">2.4.2.22</ecNumber>
    </recommendedName>
</protein>
<accession>A4XNV9</accession>
<evidence type="ECO:0000255" key="1">
    <source>
        <dbReference type="HAMAP-Rule" id="MF_01184"/>
    </source>
</evidence>
<proteinExistence type="inferred from homology"/>
<sequence>MESLKQKILSEGIVLSDQVLKVDAFLNHQIDPALMQQIGHEFAQRFAGQGITKIVTIEASGIAPAVMAGLELGIPVIFARKFQSLTLKDDLLISKVFSFTKQTESTIAISARHLTAADKVLVIDDFLANGHAAKALIDLIQQAGAQVAGIGIVIEKSFQEGRNLLESEGYRVESLARVAALENGQVRFLD</sequence>
<name>XPT_ECTM1</name>
<organism>
    <name type="scientific">Ectopseudomonas mendocina (strain ymp)</name>
    <name type="common">Pseudomonas mendocina</name>
    <dbReference type="NCBI Taxonomy" id="399739"/>
    <lineage>
        <taxon>Bacteria</taxon>
        <taxon>Pseudomonadati</taxon>
        <taxon>Pseudomonadota</taxon>
        <taxon>Gammaproteobacteria</taxon>
        <taxon>Pseudomonadales</taxon>
        <taxon>Pseudomonadaceae</taxon>
        <taxon>Ectopseudomonas</taxon>
    </lineage>
</organism>
<feature type="chain" id="PRO_0000339733" description="Xanthine phosphoribosyltransferase">
    <location>
        <begin position="1"/>
        <end position="190"/>
    </location>
</feature>
<feature type="binding site" evidence="1">
    <location>
        <position position="20"/>
    </location>
    <ligand>
        <name>xanthine</name>
        <dbReference type="ChEBI" id="CHEBI:17712"/>
    </ligand>
</feature>
<feature type="binding site" evidence="1">
    <location>
        <position position="27"/>
    </location>
    <ligand>
        <name>xanthine</name>
        <dbReference type="ChEBI" id="CHEBI:17712"/>
    </ligand>
</feature>
<feature type="binding site" evidence="1">
    <location>
        <begin position="128"/>
        <end position="132"/>
    </location>
    <ligand>
        <name>5-phospho-alpha-D-ribose 1-diphosphate</name>
        <dbReference type="ChEBI" id="CHEBI:58017"/>
    </ligand>
</feature>
<feature type="binding site" evidence="1">
    <location>
        <position position="156"/>
    </location>
    <ligand>
        <name>xanthine</name>
        <dbReference type="ChEBI" id="CHEBI:17712"/>
    </ligand>
</feature>
<keyword id="KW-0963">Cytoplasm</keyword>
<keyword id="KW-0328">Glycosyltransferase</keyword>
<keyword id="KW-0660">Purine salvage</keyword>
<keyword id="KW-0808">Transferase</keyword>
<reference key="1">
    <citation type="submission" date="2007-04" db="EMBL/GenBank/DDBJ databases">
        <title>Complete sequence of Pseudomonas mendocina ymp.</title>
        <authorList>
            <consortium name="US DOE Joint Genome Institute"/>
            <person name="Copeland A."/>
            <person name="Lucas S."/>
            <person name="Lapidus A."/>
            <person name="Barry K."/>
            <person name="Glavina del Rio T."/>
            <person name="Dalin E."/>
            <person name="Tice H."/>
            <person name="Pitluck S."/>
            <person name="Kiss H."/>
            <person name="Brettin T."/>
            <person name="Detter J.C."/>
            <person name="Bruce D."/>
            <person name="Han C."/>
            <person name="Schmutz J."/>
            <person name="Larimer F."/>
            <person name="Land M."/>
            <person name="Hauser L."/>
            <person name="Kyrpides N."/>
            <person name="Mikhailova N."/>
            <person name="Hersman L."/>
            <person name="Dubois J."/>
            <person name="Maurice P."/>
            <person name="Richardson P."/>
        </authorList>
    </citation>
    <scope>NUCLEOTIDE SEQUENCE [LARGE SCALE GENOMIC DNA]</scope>
    <source>
        <strain>ymp</strain>
    </source>
</reference>